<keyword id="KW-0131">Cell cycle</keyword>
<keyword id="KW-0132">Cell division</keyword>
<keyword id="KW-0574">Periplasm</keyword>
<keyword id="KW-1185">Reference proteome</keyword>
<keyword id="KW-0732">Signal</keyword>
<name>TOLB_BLOFL</name>
<comment type="function">
    <text evidence="1">Part of the Tol-Pal system, which plays a role in outer membrane invagination during cell division and is important for maintaining outer membrane integrity. TolB occupies a key intermediary position in the Tol-Pal system because it communicates directly with both membrane-embedded components, Pal in the outer membrane and TolA in the inner membrane.</text>
</comment>
<comment type="subunit">
    <text evidence="1">The Tol-Pal system is composed of five core proteins: the inner membrane proteins TolA, TolQ and TolR, the periplasmic protein TolB and the outer membrane protein Pal. They form a network linking the inner and outer membranes and the peptidoglycan layer.</text>
</comment>
<comment type="subcellular location">
    <subcellularLocation>
        <location evidence="1">Periplasm</location>
    </subcellularLocation>
</comment>
<comment type="similarity">
    <text evidence="1">Belongs to the TolB family.</text>
</comment>
<evidence type="ECO:0000255" key="1">
    <source>
        <dbReference type="HAMAP-Rule" id="MF_00671"/>
    </source>
</evidence>
<accession>Q7VR84</accession>
<gene>
    <name evidence="1" type="primary">tolB</name>
    <name type="ordered locus">Bfl338</name>
</gene>
<sequence>MTIFQKSFILLIIWNFSLFAFSDMKIEITHGINTAHPIAVIPFINNENITHELNNDNIEDIASIIAADLRNSGKFNTLPIAYLPYQPSKLTDIIPTFWEKLGINTVVLGAINIKNENYVISYQLIDTSNNPALVILDNQYEIEKKHLRYTAHTISDEIFEKLTGIKGVFCTRIAYILYTNNIKYAYELCTSDYDGHNQVSICRSSEPLMSPAWSPDGKKLAYVTFASGHSELIIQTLTNRSIDNIIQFPNHNGAPAWSPDGKKLAFSLSKTGSLNLYIMDLSSNNIQQITSNRYNNTEPSWFPDSQNLAYTSDQGGVPQVYKININNNRDSHRISWLNGSNQKPNISMDGTFMVMVNRNKGKQYISKLNFLTGEEETLTADSVLADTPSISPNGIMFMYSSIILNNSSSELYLDKKFTNIPDNNQSILSLASIDGKFKAHLNGSTGSIRFPTWSSLSCSY</sequence>
<dbReference type="EMBL" id="BX248583">
    <property type="protein sequence ID" value="CAD83405.1"/>
    <property type="molecule type" value="Genomic_DNA"/>
</dbReference>
<dbReference type="SMR" id="Q7VR84"/>
<dbReference type="STRING" id="203907.Bfl338"/>
<dbReference type="KEGG" id="bfl:Bfl338"/>
<dbReference type="eggNOG" id="COG0823">
    <property type="taxonomic scope" value="Bacteria"/>
</dbReference>
<dbReference type="HOGENOM" id="CLU_047123_0_0_6"/>
<dbReference type="OrthoDB" id="9802240at2"/>
<dbReference type="Proteomes" id="UP000002192">
    <property type="component" value="Chromosome"/>
</dbReference>
<dbReference type="GO" id="GO:0042597">
    <property type="term" value="C:periplasmic space"/>
    <property type="evidence" value="ECO:0007669"/>
    <property type="project" value="UniProtKB-SubCell"/>
</dbReference>
<dbReference type="GO" id="GO:0051301">
    <property type="term" value="P:cell division"/>
    <property type="evidence" value="ECO:0007669"/>
    <property type="project" value="UniProtKB-UniRule"/>
</dbReference>
<dbReference type="GO" id="GO:0017038">
    <property type="term" value="P:protein import"/>
    <property type="evidence" value="ECO:0007669"/>
    <property type="project" value="InterPro"/>
</dbReference>
<dbReference type="Gene3D" id="2.120.10.30">
    <property type="entry name" value="TolB, C-terminal domain"/>
    <property type="match status" value="1"/>
</dbReference>
<dbReference type="Gene3D" id="3.40.50.10070">
    <property type="entry name" value="TolB, N-terminal domain"/>
    <property type="match status" value="1"/>
</dbReference>
<dbReference type="HAMAP" id="MF_00671">
    <property type="entry name" value="TolB"/>
    <property type="match status" value="1"/>
</dbReference>
<dbReference type="InterPro" id="IPR011042">
    <property type="entry name" value="6-blade_b-propeller_TolB-like"/>
</dbReference>
<dbReference type="InterPro" id="IPR011659">
    <property type="entry name" value="PD40"/>
</dbReference>
<dbReference type="InterPro" id="IPR014167">
    <property type="entry name" value="Tol-Pal_TolB"/>
</dbReference>
<dbReference type="InterPro" id="IPR007195">
    <property type="entry name" value="TolB_N"/>
</dbReference>
<dbReference type="NCBIfam" id="TIGR02800">
    <property type="entry name" value="propeller_TolB"/>
    <property type="match status" value="1"/>
</dbReference>
<dbReference type="PANTHER" id="PTHR36842:SF1">
    <property type="entry name" value="PROTEIN TOLB"/>
    <property type="match status" value="1"/>
</dbReference>
<dbReference type="PANTHER" id="PTHR36842">
    <property type="entry name" value="PROTEIN TOLB HOMOLOG"/>
    <property type="match status" value="1"/>
</dbReference>
<dbReference type="Pfam" id="PF07676">
    <property type="entry name" value="PD40"/>
    <property type="match status" value="3"/>
</dbReference>
<dbReference type="Pfam" id="PF04052">
    <property type="entry name" value="TolB_N"/>
    <property type="match status" value="1"/>
</dbReference>
<dbReference type="SUPFAM" id="SSF52964">
    <property type="entry name" value="TolB, N-terminal domain"/>
    <property type="match status" value="1"/>
</dbReference>
<dbReference type="SUPFAM" id="SSF69304">
    <property type="entry name" value="Tricorn protease N-terminal domain"/>
    <property type="match status" value="1"/>
</dbReference>
<protein>
    <recommendedName>
        <fullName evidence="1">Tol-Pal system protein TolB</fullName>
    </recommendedName>
</protein>
<organism>
    <name type="scientific">Blochmanniella floridana</name>
    <dbReference type="NCBI Taxonomy" id="203907"/>
    <lineage>
        <taxon>Bacteria</taxon>
        <taxon>Pseudomonadati</taxon>
        <taxon>Pseudomonadota</taxon>
        <taxon>Gammaproteobacteria</taxon>
        <taxon>Enterobacterales</taxon>
        <taxon>Enterobacteriaceae</taxon>
        <taxon>ant endosymbionts</taxon>
        <taxon>Candidatus Blochmanniella</taxon>
    </lineage>
</organism>
<proteinExistence type="inferred from homology"/>
<feature type="signal peptide" evidence="1">
    <location>
        <begin position="1"/>
        <end position="22"/>
    </location>
</feature>
<feature type="chain" id="PRO_0000034636" description="Tol-Pal system protein TolB" evidence="1">
    <location>
        <begin position="23"/>
        <end position="460"/>
    </location>
</feature>
<reference key="1">
    <citation type="journal article" date="2003" name="Proc. Natl. Acad. Sci. U.S.A.">
        <title>The genome sequence of Blochmannia floridanus: comparative analysis of reduced genomes.</title>
        <authorList>
            <person name="Gil R."/>
            <person name="Silva F.J."/>
            <person name="Zientz E."/>
            <person name="Delmotte F."/>
            <person name="Gonzalez-Candelas F."/>
            <person name="Latorre A."/>
            <person name="Rausell C."/>
            <person name="Kamerbeek J."/>
            <person name="Gadau J."/>
            <person name="Hoelldobler B."/>
            <person name="van Ham R.C.H.J."/>
            <person name="Gross R."/>
            <person name="Moya A."/>
        </authorList>
    </citation>
    <scope>NUCLEOTIDE SEQUENCE [LARGE SCALE GENOMIC DNA]</scope>
</reference>